<reference key="1">
    <citation type="journal article" date="2003" name="Proc. Natl. Acad. Sci. U.S.A.">
        <title>Complete genome sequence of the marine planctomycete Pirellula sp. strain 1.</title>
        <authorList>
            <person name="Gloeckner F.O."/>
            <person name="Kube M."/>
            <person name="Bauer M."/>
            <person name="Teeling H."/>
            <person name="Lombardot T."/>
            <person name="Ludwig W."/>
            <person name="Gade D."/>
            <person name="Beck A."/>
            <person name="Borzym K."/>
            <person name="Heitmann K."/>
            <person name="Rabus R."/>
            <person name="Schlesner H."/>
            <person name="Amann R."/>
            <person name="Reinhardt R."/>
        </authorList>
    </citation>
    <scope>NUCLEOTIDE SEQUENCE [LARGE SCALE GENOMIC DNA]</scope>
    <source>
        <strain>DSM 10527 / NCIMB 13988 / SH1</strain>
    </source>
</reference>
<evidence type="ECO:0000255" key="1">
    <source>
        <dbReference type="HAMAP-Rule" id="MF_01694"/>
    </source>
</evidence>
<evidence type="ECO:0000255" key="2">
    <source>
        <dbReference type="PROSITE-ProRule" id="PRU01266"/>
    </source>
</evidence>
<evidence type="ECO:0000256" key="3">
    <source>
        <dbReference type="SAM" id="MobiDB-lite"/>
    </source>
</evidence>
<keyword id="KW-0001">2Fe-2S</keyword>
<keyword id="KW-0004">4Fe-4S</keyword>
<keyword id="KW-0093">Biotin biosynthesis</keyword>
<keyword id="KW-0408">Iron</keyword>
<keyword id="KW-0411">Iron-sulfur</keyword>
<keyword id="KW-0479">Metal-binding</keyword>
<keyword id="KW-1185">Reference proteome</keyword>
<keyword id="KW-0949">S-adenosyl-L-methionine</keyword>
<keyword id="KW-0808">Transferase</keyword>
<comment type="function">
    <text evidence="1">Catalyzes the conversion of dethiobiotin (DTB) to biotin by the insertion of a sulfur atom into dethiobiotin via a radical-based mechanism.</text>
</comment>
<comment type="catalytic activity">
    <reaction evidence="1">
        <text>(4R,5S)-dethiobiotin + (sulfur carrier)-SH + 2 reduced [2Fe-2S]-[ferredoxin] + 2 S-adenosyl-L-methionine = (sulfur carrier)-H + biotin + 2 5'-deoxyadenosine + 2 L-methionine + 2 oxidized [2Fe-2S]-[ferredoxin]</text>
        <dbReference type="Rhea" id="RHEA:22060"/>
        <dbReference type="Rhea" id="RHEA-COMP:10000"/>
        <dbReference type="Rhea" id="RHEA-COMP:10001"/>
        <dbReference type="Rhea" id="RHEA-COMP:14737"/>
        <dbReference type="Rhea" id="RHEA-COMP:14739"/>
        <dbReference type="ChEBI" id="CHEBI:17319"/>
        <dbReference type="ChEBI" id="CHEBI:29917"/>
        <dbReference type="ChEBI" id="CHEBI:33737"/>
        <dbReference type="ChEBI" id="CHEBI:33738"/>
        <dbReference type="ChEBI" id="CHEBI:57586"/>
        <dbReference type="ChEBI" id="CHEBI:57844"/>
        <dbReference type="ChEBI" id="CHEBI:59789"/>
        <dbReference type="ChEBI" id="CHEBI:64428"/>
        <dbReference type="ChEBI" id="CHEBI:149473"/>
        <dbReference type="EC" id="2.8.1.6"/>
    </reaction>
</comment>
<comment type="cofactor">
    <cofactor evidence="1">
        <name>[4Fe-4S] cluster</name>
        <dbReference type="ChEBI" id="CHEBI:49883"/>
    </cofactor>
    <text evidence="1">Binds 1 [4Fe-4S] cluster. The cluster is coordinated with 3 cysteines and an exchangeable S-adenosyl-L-methionine.</text>
</comment>
<comment type="cofactor">
    <cofactor evidence="1">
        <name>[2Fe-2S] cluster</name>
        <dbReference type="ChEBI" id="CHEBI:190135"/>
    </cofactor>
    <text evidence="1">Binds 1 [2Fe-2S] cluster. The cluster is coordinated with 3 cysteines and 1 arginine.</text>
</comment>
<comment type="pathway">
    <text evidence="1">Cofactor biosynthesis; biotin biosynthesis; biotin from 7,8-diaminononanoate: step 2/2.</text>
</comment>
<comment type="subunit">
    <text evidence="1">Homodimer.</text>
</comment>
<comment type="similarity">
    <text evidence="1">Belongs to the radical SAM superfamily. Biotin synthase family.</text>
</comment>
<name>BIOB_RHOBA</name>
<feature type="chain" id="PRO_0000381578" description="Biotin synthase">
    <location>
        <begin position="1"/>
        <end position="359"/>
    </location>
</feature>
<feature type="domain" description="Radical SAM core" evidence="2">
    <location>
        <begin position="76"/>
        <end position="302"/>
    </location>
</feature>
<feature type="region of interest" description="Disordered" evidence="3">
    <location>
        <begin position="1"/>
        <end position="23"/>
    </location>
</feature>
<feature type="binding site" evidence="1">
    <location>
        <position position="94"/>
    </location>
    <ligand>
        <name>[4Fe-4S] cluster</name>
        <dbReference type="ChEBI" id="CHEBI:49883"/>
        <note>4Fe-4S-S-AdoMet</note>
    </ligand>
</feature>
<feature type="binding site" evidence="1">
    <location>
        <position position="98"/>
    </location>
    <ligand>
        <name>[4Fe-4S] cluster</name>
        <dbReference type="ChEBI" id="CHEBI:49883"/>
        <note>4Fe-4S-S-AdoMet</note>
    </ligand>
</feature>
<feature type="binding site" evidence="1">
    <location>
        <position position="101"/>
    </location>
    <ligand>
        <name>[4Fe-4S] cluster</name>
        <dbReference type="ChEBI" id="CHEBI:49883"/>
        <note>4Fe-4S-S-AdoMet</note>
    </ligand>
</feature>
<feature type="binding site" evidence="1">
    <location>
        <position position="138"/>
    </location>
    <ligand>
        <name>[2Fe-2S] cluster</name>
        <dbReference type="ChEBI" id="CHEBI:190135"/>
    </ligand>
</feature>
<feature type="binding site" evidence="1">
    <location>
        <position position="170"/>
    </location>
    <ligand>
        <name>[2Fe-2S] cluster</name>
        <dbReference type="ChEBI" id="CHEBI:190135"/>
    </ligand>
</feature>
<feature type="binding site" evidence="1">
    <location>
        <position position="230"/>
    </location>
    <ligand>
        <name>[2Fe-2S] cluster</name>
        <dbReference type="ChEBI" id="CHEBI:190135"/>
    </ligand>
</feature>
<feature type="binding site" evidence="1">
    <location>
        <position position="300"/>
    </location>
    <ligand>
        <name>[2Fe-2S] cluster</name>
        <dbReference type="ChEBI" id="CHEBI:190135"/>
    </ligand>
</feature>
<gene>
    <name evidence="1" type="primary">bioB</name>
    <name type="ordered locus">RB10275</name>
</gene>
<proteinExistence type="inferred from homology"/>
<dbReference type="EC" id="2.8.1.6" evidence="1"/>
<dbReference type="EMBL" id="BX294151">
    <property type="protein sequence ID" value="CAD78799.1"/>
    <property type="molecule type" value="Genomic_DNA"/>
</dbReference>
<dbReference type="RefSeq" id="NP_869342.1">
    <property type="nucleotide sequence ID" value="NC_005027.1"/>
</dbReference>
<dbReference type="RefSeq" id="WP_007326296.1">
    <property type="nucleotide sequence ID" value="NC_005027.1"/>
</dbReference>
<dbReference type="SMR" id="Q7UF84"/>
<dbReference type="FunCoup" id="Q7UF84">
    <property type="interactions" value="344"/>
</dbReference>
<dbReference type="STRING" id="243090.RB10275"/>
<dbReference type="EnsemblBacteria" id="CAD78799">
    <property type="protein sequence ID" value="CAD78799"/>
    <property type="gene ID" value="RB10275"/>
</dbReference>
<dbReference type="KEGG" id="rba:RB10275"/>
<dbReference type="PATRIC" id="fig|243090.15.peg.4968"/>
<dbReference type="eggNOG" id="COG0502">
    <property type="taxonomic scope" value="Bacteria"/>
</dbReference>
<dbReference type="HOGENOM" id="CLU_033172_2_1_0"/>
<dbReference type="InParanoid" id="Q7UF84"/>
<dbReference type="OrthoDB" id="9786826at2"/>
<dbReference type="UniPathway" id="UPA00078">
    <property type="reaction ID" value="UER00162"/>
</dbReference>
<dbReference type="Proteomes" id="UP000001025">
    <property type="component" value="Chromosome"/>
</dbReference>
<dbReference type="GO" id="GO:0051537">
    <property type="term" value="F:2 iron, 2 sulfur cluster binding"/>
    <property type="evidence" value="ECO:0000318"/>
    <property type="project" value="GO_Central"/>
</dbReference>
<dbReference type="GO" id="GO:0051539">
    <property type="term" value="F:4 iron, 4 sulfur cluster binding"/>
    <property type="evidence" value="ECO:0007669"/>
    <property type="project" value="UniProtKB-KW"/>
</dbReference>
<dbReference type="GO" id="GO:0004076">
    <property type="term" value="F:biotin synthase activity"/>
    <property type="evidence" value="ECO:0000318"/>
    <property type="project" value="GO_Central"/>
</dbReference>
<dbReference type="GO" id="GO:0005506">
    <property type="term" value="F:iron ion binding"/>
    <property type="evidence" value="ECO:0007669"/>
    <property type="project" value="UniProtKB-UniRule"/>
</dbReference>
<dbReference type="GO" id="GO:0009102">
    <property type="term" value="P:biotin biosynthetic process"/>
    <property type="evidence" value="ECO:0000318"/>
    <property type="project" value="GO_Central"/>
</dbReference>
<dbReference type="CDD" id="cd01335">
    <property type="entry name" value="Radical_SAM"/>
    <property type="match status" value="1"/>
</dbReference>
<dbReference type="FunFam" id="3.20.20.70:FF:000026">
    <property type="entry name" value="Biotin synthase"/>
    <property type="match status" value="1"/>
</dbReference>
<dbReference type="Gene3D" id="3.20.20.70">
    <property type="entry name" value="Aldolase class I"/>
    <property type="match status" value="1"/>
</dbReference>
<dbReference type="HAMAP" id="MF_01694">
    <property type="entry name" value="BioB"/>
    <property type="match status" value="1"/>
</dbReference>
<dbReference type="InterPro" id="IPR013785">
    <property type="entry name" value="Aldolase_TIM"/>
</dbReference>
<dbReference type="InterPro" id="IPR010722">
    <property type="entry name" value="BATS_dom"/>
</dbReference>
<dbReference type="InterPro" id="IPR002684">
    <property type="entry name" value="Biotin_synth/BioAB"/>
</dbReference>
<dbReference type="InterPro" id="IPR024177">
    <property type="entry name" value="Biotin_synthase"/>
</dbReference>
<dbReference type="InterPro" id="IPR006638">
    <property type="entry name" value="Elp3/MiaA/NifB-like_rSAM"/>
</dbReference>
<dbReference type="InterPro" id="IPR007197">
    <property type="entry name" value="rSAM"/>
</dbReference>
<dbReference type="NCBIfam" id="TIGR00433">
    <property type="entry name" value="bioB"/>
    <property type="match status" value="1"/>
</dbReference>
<dbReference type="PANTHER" id="PTHR22976">
    <property type="entry name" value="BIOTIN SYNTHASE"/>
    <property type="match status" value="1"/>
</dbReference>
<dbReference type="PANTHER" id="PTHR22976:SF2">
    <property type="entry name" value="BIOTIN SYNTHASE, MITOCHONDRIAL"/>
    <property type="match status" value="1"/>
</dbReference>
<dbReference type="Pfam" id="PF06968">
    <property type="entry name" value="BATS"/>
    <property type="match status" value="1"/>
</dbReference>
<dbReference type="Pfam" id="PF04055">
    <property type="entry name" value="Radical_SAM"/>
    <property type="match status" value="1"/>
</dbReference>
<dbReference type="PIRSF" id="PIRSF001619">
    <property type="entry name" value="Biotin_synth"/>
    <property type="match status" value="1"/>
</dbReference>
<dbReference type="SFLD" id="SFLDG01060">
    <property type="entry name" value="BATS_domain_containing"/>
    <property type="match status" value="1"/>
</dbReference>
<dbReference type="SFLD" id="SFLDG01278">
    <property type="entry name" value="biotin_synthase_like"/>
    <property type="match status" value="1"/>
</dbReference>
<dbReference type="SMART" id="SM00876">
    <property type="entry name" value="BATS"/>
    <property type="match status" value="1"/>
</dbReference>
<dbReference type="SMART" id="SM00729">
    <property type="entry name" value="Elp3"/>
    <property type="match status" value="1"/>
</dbReference>
<dbReference type="SUPFAM" id="SSF102114">
    <property type="entry name" value="Radical SAM enzymes"/>
    <property type="match status" value="1"/>
</dbReference>
<dbReference type="PROSITE" id="PS51918">
    <property type="entry name" value="RADICAL_SAM"/>
    <property type="match status" value="1"/>
</dbReference>
<sequence length="359" mass="38977">MSVADSSAADSVAAPDTADTSSSVGVFSPPGYYDALAQQVLDGTPITREQALAMLEASDLDVPAIISAGYRIRHQYFGNTVQLYFLMNAKSGLCPEDCHYCSQSKVSDAPVPKYNILKRDALMDAAKVAAERGAKTYCLVISARGPNEREMKAVEEIVPEIKQKYNLDICACLGLLDESQAARLKACGVDRVNHNLNSSESHYEKICTTHTYEDRVQTLRHVRDAGMEMCSGGIIGMGESKSDIVSMAFDLNELGVQSIPVNILNAIDGTPLEGTAALTPQDALKALAMFRFVNPDRELRIAGGRELHLRQLQPMGLYVANSVFVGDYLTTQGQAPQADYDMIRDLGFDVTGSCEEMSI</sequence>
<protein>
    <recommendedName>
        <fullName evidence="1">Biotin synthase</fullName>
        <ecNumber evidence="1">2.8.1.6</ecNumber>
    </recommendedName>
</protein>
<accession>Q7UF84</accession>
<organism>
    <name type="scientific">Rhodopirellula baltica (strain DSM 10527 / NCIMB 13988 / SH1)</name>
    <dbReference type="NCBI Taxonomy" id="243090"/>
    <lineage>
        <taxon>Bacteria</taxon>
        <taxon>Pseudomonadati</taxon>
        <taxon>Planctomycetota</taxon>
        <taxon>Planctomycetia</taxon>
        <taxon>Pirellulales</taxon>
        <taxon>Pirellulaceae</taxon>
        <taxon>Rhodopirellula</taxon>
    </lineage>
</organism>